<keyword id="KW-0963">Cytoplasm</keyword>
<keyword id="KW-0489">Methyltransferase</keyword>
<keyword id="KW-0698">rRNA processing</keyword>
<keyword id="KW-0949">S-adenosyl-L-methionine</keyword>
<keyword id="KW-0808">Transferase</keyword>
<comment type="function">
    <text evidence="1">Specifically methylates the N7 position of guanine in position 527 of 16S rRNA.</text>
</comment>
<comment type="catalytic activity">
    <reaction evidence="1">
        <text>guanosine(527) in 16S rRNA + S-adenosyl-L-methionine = N(7)-methylguanosine(527) in 16S rRNA + S-adenosyl-L-homocysteine</text>
        <dbReference type="Rhea" id="RHEA:42732"/>
        <dbReference type="Rhea" id="RHEA-COMP:10209"/>
        <dbReference type="Rhea" id="RHEA-COMP:10210"/>
        <dbReference type="ChEBI" id="CHEBI:57856"/>
        <dbReference type="ChEBI" id="CHEBI:59789"/>
        <dbReference type="ChEBI" id="CHEBI:74269"/>
        <dbReference type="ChEBI" id="CHEBI:74480"/>
        <dbReference type="EC" id="2.1.1.170"/>
    </reaction>
</comment>
<comment type="subcellular location">
    <subcellularLocation>
        <location evidence="1">Cytoplasm</location>
    </subcellularLocation>
</comment>
<comment type="similarity">
    <text evidence="1">Belongs to the methyltransferase superfamily. RNA methyltransferase RsmG family.</text>
</comment>
<organism>
    <name type="scientific">Serratia proteamaculans (strain 568)</name>
    <dbReference type="NCBI Taxonomy" id="399741"/>
    <lineage>
        <taxon>Bacteria</taxon>
        <taxon>Pseudomonadati</taxon>
        <taxon>Pseudomonadota</taxon>
        <taxon>Gammaproteobacteria</taxon>
        <taxon>Enterobacterales</taxon>
        <taxon>Yersiniaceae</taxon>
        <taxon>Serratia</taxon>
    </lineage>
</organism>
<proteinExistence type="inferred from homology"/>
<dbReference type="EC" id="2.1.1.170" evidence="1"/>
<dbReference type="EMBL" id="CP000826">
    <property type="protein sequence ID" value="ABV44001.1"/>
    <property type="molecule type" value="Genomic_DNA"/>
</dbReference>
<dbReference type="SMR" id="A8GLL1"/>
<dbReference type="STRING" id="399741.Spro_4909"/>
<dbReference type="KEGG" id="spe:Spro_4909"/>
<dbReference type="eggNOG" id="COG0357">
    <property type="taxonomic scope" value="Bacteria"/>
</dbReference>
<dbReference type="HOGENOM" id="CLU_065341_2_2_6"/>
<dbReference type="OrthoDB" id="9808773at2"/>
<dbReference type="GO" id="GO:0005829">
    <property type="term" value="C:cytosol"/>
    <property type="evidence" value="ECO:0007669"/>
    <property type="project" value="TreeGrafter"/>
</dbReference>
<dbReference type="GO" id="GO:0070043">
    <property type="term" value="F:rRNA (guanine-N7-)-methyltransferase activity"/>
    <property type="evidence" value="ECO:0007669"/>
    <property type="project" value="UniProtKB-UniRule"/>
</dbReference>
<dbReference type="CDD" id="cd02440">
    <property type="entry name" value="AdoMet_MTases"/>
    <property type="match status" value="1"/>
</dbReference>
<dbReference type="FunFam" id="3.40.50.150:FF:000032">
    <property type="entry name" value="Ribosomal RNA small subunit methyltransferase G"/>
    <property type="match status" value="1"/>
</dbReference>
<dbReference type="Gene3D" id="3.40.50.150">
    <property type="entry name" value="Vaccinia Virus protein VP39"/>
    <property type="match status" value="1"/>
</dbReference>
<dbReference type="HAMAP" id="MF_00074">
    <property type="entry name" value="16SrRNA_methyltr_G"/>
    <property type="match status" value="1"/>
</dbReference>
<dbReference type="InterPro" id="IPR003682">
    <property type="entry name" value="rRNA_ssu_MeTfrase_G"/>
</dbReference>
<dbReference type="InterPro" id="IPR029063">
    <property type="entry name" value="SAM-dependent_MTases_sf"/>
</dbReference>
<dbReference type="NCBIfam" id="TIGR00138">
    <property type="entry name" value="rsmG_gidB"/>
    <property type="match status" value="1"/>
</dbReference>
<dbReference type="PANTHER" id="PTHR31760">
    <property type="entry name" value="S-ADENOSYL-L-METHIONINE-DEPENDENT METHYLTRANSFERASES SUPERFAMILY PROTEIN"/>
    <property type="match status" value="1"/>
</dbReference>
<dbReference type="PANTHER" id="PTHR31760:SF0">
    <property type="entry name" value="S-ADENOSYL-L-METHIONINE-DEPENDENT METHYLTRANSFERASES SUPERFAMILY PROTEIN"/>
    <property type="match status" value="1"/>
</dbReference>
<dbReference type="Pfam" id="PF02527">
    <property type="entry name" value="GidB"/>
    <property type="match status" value="1"/>
</dbReference>
<dbReference type="PIRSF" id="PIRSF003078">
    <property type="entry name" value="GidB"/>
    <property type="match status" value="1"/>
</dbReference>
<dbReference type="SUPFAM" id="SSF53335">
    <property type="entry name" value="S-adenosyl-L-methionine-dependent methyltransferases"/>
    <property type="match status" value="1"/>
</dbReference>
<accession>A8GLL1</accession>
<protein>
    <recommendedName>
        <fullName evidence="1">Ribosomal RNA small subunit methyltransferase G</fullName>
        <ecNumber evidence="1">2.1.1.170</ecNumber>
    </recommendedName>
    <alternativeName>
        <fullName evidence="1">16S rRNA 7-methylguanosine methyltransferase</fullName>
        <shortName evidence="1">16S rRNA m7G methyltransferase</shortName>
    </alternativeName>
</protein>
<name>RSMG_SERP5</name>
<gene>
    <name evidence="1" type="primary">rsmG</name>
    <name type="ordered locus">Spro_4909</name>
</gene>
<feature type="chain" id="PRO_1000057511" description="Ribosomal RNA small subunit methyltransferase G">
    <location>
        <begin position="1"/>
        <end position="206"/>
    </location>
</feature>
<feature type="binding site" evidence="1">
    <location>
        <position position="73"/>
    </location>
    <ligand>
        <name>S-adenosyl-L-methionine</name>
        <dbReference type="ChEBI" id="CHEBI:59789"/>
    </ligand>
</feature>
<feature type="binding site" evidence="1">
    <location>
        <position position="78"/>
    </location>
    <ligand>
        <name>S-adenosyl-L-methionine</name>
        <dbReference type="ChEBI" id="CHEBI:59789"/>
    </ligand>
</feature>
<feature type="binding site" evidence="1">
    <location>
        <begin position="124"/>
        <end position="125"/>
    </location>
    <ligand>
        <name>S-adenosyl-L-methionine</name>
        <dbReference type="ChEBI" id="CHEBI:59789"/>
    </ligand>
</feature>
<feature type="binding site" evidence="1">
    <location>
        <position position="139"/>
    </location>
    <ligand>
        <name>S-adenosyl-L-methionine</name>
        <dbReference type="ChEBI" id="CHEBI:59789"/>
    </ligand>
</feature>
<evidence type="ECO:0000255" key="1">
    <source>
        <dbReference type="HAMAP-Rule" id="MF_00074"/>
    </source>
</evidence>
<sequence length="206" mass="23127">MQKKLDSLLKAAGITLPDRQKQQLLGYVGMLDKWNKAYNLTSVRDPQQMLVRHILDSIVVNPHLQGKRFIDVGTGPGLPGIPLAIVRPDSHFTLLDSLGKRVRFLRQVQHELGLTNVEPVQSRVEEFPAEPPFDGVISRAFASLQDMLSWCHHLPAKGQGRFYALKGVRPDEELTQLPPGIELESVVRLQVPELEGERHLVILKAN</sequence>
<reference key="1">
    <citation type="submission" date="2007-09" db="EMBL/GenBank/DDBJ databases">
        <title>Complete sequence of chromosome of Serratia proteamaculans 568.</title>
        <authorList>
            <consortium name="US DOE Joint Genome Institute"/>
            <person name="Copeland A."/>
            <person name="Lucas S."/>
            <person name="Lapidus A."/>
            <person name="Barry K."/>
            <person name="Glavina del Rio T."/>
            <person name="Dalin E."/>
            <person name="Tice H."/>
            <person name="Pitluck S."/>
            <person name="Chain P."/>
            <person name="Malfatti S."/>
            <person name="Shin M."/>
            <person name="Vergez L."/>
            <person name="Schmutz J."/>
            <person name="Larimer F."/>
            <person name="Land M."/>
            <person name="Hauser L."/>
            <person name="Kyrpides N."/>
            <person name="Kim E."/>
            <person name="Taghavi S."/>
            <person name="Newman L."/>
            <person name="Vangronsveld J."/>
            <person name="van der Lelie D."/>
            <person name="Richardson P."/>
        </authorList>
    </citation>
    <scope>NUCLEOTIDE SEQUENCE [LARGE SCALE GENOMIC DNA]</scope>
    <source>
        <strain>568</strain>
    </source>
</reference>